<sequence length="952" mass="107385">MIEKTYQPSDIESRMSRVWEEAGAFKAGRPERREAEPFTIVIPPPNVTGSLHMGHALNNTLQDVLCRFERMRGRDVLWQPGTDHAGIATQMVVERQLMERKEPGRREMGRARFLERVWQWKAESGGVIVNQLKRLGASCDWSRERFTMDEGLSRAVAKVFVELHRAGLIYKDKRLVNWDPKLLTAISDLEVKQVEVKGSLWHLRYPIEGKAFDPSDPSTYIVVATTRPETMLGDTAVAVHPENAKLEYLIGSNVVLPLAGRIIPIVGDDYADPEKGTGAVKITPAHDFNDFEVGRRHHLPQISVLDREGRLTLSENEDFLRGLPSGALMLAEEFDGMDRFAARKAIVARLEEFGFLDKIEPHTHMVPHGDRSNAVVEPYLTDQWYVDAKELARPAMAAVRSGETAFVPKNWEKTYFEWMENIQPWCISRQLWWGHQIPAWYGPDGKVFVAETEDEAIGHALGYYVEQGVITAEQGAGMARDPAKRDGFITRDEDVLDTWFSSALWPFSTLGWPDETPEVRRYYPTNVLVTGFDIIFFWVARMMMMGIHFMKEAPFSTVYIHALVRDEKGAKMSKSKGNVIDPLNLVDKYGADALRFTLAAMAVQGRDIKLSPQRVEGYRNFATKFWNACRFAEMNDCVVPARFDPTAATETLNRWIVHETARTACEVTEAIESSRFNDAASAIYRFVWNVYCDWYLELAKPVILGEDSPAKSETRAMVAWARDEILKLLHPFMPFITEELWAVTAERTRLLTLTEWPNKADQTRKRRTLIAAADPFIGSEPITDLLEPYFRDDAAEAEIGWVVDLVTAIRSVRAEMNIPPATLAPLVLAGASDESRARAQRWSDVIKRMSRLADISFADQAPAGAVQLLIRGEVAALPLKGIVDVAAQRTRLGKEIAKADADIARVDLKLADQNFIANAPGEIVEDEKEKREAAAARKAKFVEALERLKAAE</sequence>
<keyword id="KW-0030">Aminoacyl-tRNA synthetase</keyword>
<keyword id="KW-0067">ATP-binding</keyword>
<keyword id="KW-0175">Coiled coil</keyword>
<keyword id="KW-0963">Cytoplasm</keyword>
<keyword id="KW-0436">Ligase</keyword>
<keyword id="KW-0547">Nucleotide-binding</keyword>
<keyword id="KW-0648">Protein biosynthesis</keyword>
<keyword id="KW-1185">Reference proteome</keyword>
<gene>
    <name evidence="1" type="primary">valS</name>
    <name type="ordered locus">Nwi_1436</name>
</gene>
<evidence type="ECO:0000255" key="1">
    <source>
        <dbReference type="HAMAP-Rule" id="MF_02004"/>
    </source>
</evidence>
<proteinExistence type="inferred from homology"/>
<dbReference type="EC" id="6.1.1.9" evidence="1"/>
<dbReference type="EMBL" id="CP000115">
    <property type="protein sequence ID" value="ABA04697.1"/>
    <property type="molecule type" value="Genomic_DNA"/>
</dbReference>
<dbReference type="RefSeq" id="WP_011314705.1">
    <property type="nucleotide sequence ID" value="NC_007406.1"/>
</dbReference>
<dbReference type="SMR" id="Q3SSP4"/>
<dbReference type="STRING" id="323098.Nwi_1436"/>
<dbReference type="KEGG" id="nwi:Nwi_1436"/>
<dbReference type="eggNOG" id="COG0525">
    <property type="taxonomic scope" value="Bacteria"/>
</dbReference>
<dbReference type="HOGENOM" id="CLU_001493_0_2_5"/>
<dbReference type="OrthoDB" id="9810365at2"/>
<dbReference type="Proteomes" id="UP000002531">
    <property type="component" value="Chromosome"/>
</dbReference>
<dbReference type="GO" id="GO:0005829">
    <property type="term" value="C:cytosol"/>
    <property type="evidence" value="ECO:0007669"/>
    <property type="project" value="TreeGrafter"/>
</dbReference>
<dbReference type="GO" id="GO:0002161">
    <property type="term" value="F:aminoacyl-tRNA deacylase activity"/>
    <property type="evidence" value="ECO:0007669"/>
    <property type="project" value="InterPro"/>
</dbReference>
<dbReference type="GO" id="GO:0005524">
    <property type="term" value="F:ATP binding"/>
    <property type="evidence" value="ECO:0007669"/>
    <property type="project" value="UniProtKB-UniRule"/>
</dbReference>
<dbReference type="GO" id="GO:0004832">
    <property type="term" value="F:valine-tRNA ligase activity"/>
    <property type="evidence" value="ECO:0007669"/>
    <property type="project" value="UniProtKB-UniRule"/>
</dbReference>
<dbReference type="GO" id="GO:0006438">
    <property type="term" value="P:valyl-tRNA aminoacylation"/>
    <property type="evidence" value="ECO:0007669"/>
    <property type="project" value="UniProtKB-UniRule"/>
</dbReference>
<dbReference type="CDD" id="cd07962">
    <property type="entry name" value="Anticodon_Ia_Val"/>
    <property type="match status" value="1"/>
</dbReference>
<dbReference type="CDD" id="cd00817">
    <property type="entry name" value="ValRS_core"/>
    <property type="match status" value="1"/>
</dbReference>
<dbReference type="FunFam" id="1.10.287.380:FF:000001">
    <property type="entry name" value="Valine--tRNA ligase"/>
    <property type="match status" value="1"/>
</dbReference>
<dbReference type="FunFam" id="3.40.50.620:FF:000032">
    <property type="entry name" value="Valine--tRNA ligase"/>
    <property type="match status" value="1"/>
</dbReference>
<dbReference type="FunFam" id="3.40.50.620:FF:000078">
    <property type="entry name" value="Valine--tRNA ligase, mitochondrial"/>
    <property type="match status" value="1"/>
</dbReference>
<dbReference type="Gene3D" id="3.40.50.620">
    <property type="entry name" value="HUPs"/>
    <property type="match status" value="2"/>
</dbReference>
<dbReference type="Gene3D" id="1.10.730.10">
    <property type="entry name" value="Isoleucyl-tRNA Synthetase, Domain 1"/>
    <property type="match status" value="1"/>
</dbReference>
<dbReference type="Gene3D" id="1.10.287.380">
    <property type="entry name" value="Valyl-tRNA synthetase, C-terminal domain"/>
    <property type="match status" value="1"/>
</dbReference>
<dbReference type="Gene3D" id="3.90.740.10">
    <property type="entry name" value="Valyl/Leucyl/Isoleucyl-tRNA synthetase, editing domain"/>
    <property type="match status" value="1"/>
</dbReference>
<dbReference type="HAMAP" id="MF_02004">
    <property type="entry name" value="Val_tRNA_synth_type1"/>
    <property type="match status" value="1"/>
</dbReference>
<dbReference type="InterPro" id="IPR001412">
    <property type="entry name" value="aa-tRNA-synth_I_CS"/>
</dbReference>
<dbReference type="InterPro" id="IPR002300">
    <property type="entry name" value="aa-tRNA-synth_Ia"/>
</dbReference>
<dbReference type="InterPro" id="IPR033705">
    <property type="entry name" value="Anticodon_Ia_Val"/>
</dbReference>
<dbReference type="InterPro" id="IPR013155">
    <property type="entry name" value="M/V/L/I-tRNA-synth_anticd-bd"/>
</dbReference>
<dbReference type="InterPro" id="IPR014729">
    <property type="entry name" value="Rossmann-like_a/b/a_fold"/>
</dbReference>
<dbReference type="InterPro" id="IPR010978">
    <property type="entry name" value="tRNA-bd_arm"/>
</dbReference>
<dbReference type="InterPro" id="IPR009080">
    <property type="entry name" value="tRNAsynth_Ia_anticodon-bd"/>
</dbReference>
<dbReference type="InterPro" id="IPR037118">
    <property type="entry name" value="Val-tRNA_synth_C_sf"/>
</dbReference>
<dbReference type="InterPro" id="IPR019499">
    <property type="entry name" value="Val-tRNA_synth_tRNA-bd"/>
</dbReference>
<dbReference type="InterPro" id="IPR009008">
    <property type="entry name" value="Val/Leu/Ile-tRNA-synth_edit"/>
</dbReference>
<dbReference type="InterPro" id="IPR002303">
    <property type="entry name" value="Valyl-tRNA_ligase"/>
</dbReference>
<dbReference type="NCBIfam" id="NF004349">
    <property type="entry name" value="PRK05729.1"/>
    <property type="match status" value="1"/>
</dbReference>
<dbReference type="NCBIfam" id="TIGR00422">
    <property type="entry name" value="valS"/>
    <property type="match status" value="1"/>
</dbReference>
<dbReference type="PANTHER" id="PTHR11946:SF93">
    <property type="entry name" value="VALINE--TRNA LIGASE, CHLOROPLASTIC_MITOCHONDRIAL 2"/>
    <property type="match status" value="1"/>
</dbReference>
<dbReference type="PANTHER" id="PTHR11946">
    <property type="entry name" value="VALYL-TRNA SYNTHETASES"/>
    <property type="match status" value="1"/>
</dbReference>
<dbReference type="Pfam" id="PF08264">
    <property type="entry name" value="Anticodon_1"/>
    <property type="match status" value="1"/>
</dbReference>
<dbReference type="Pfam" id="PF00133">
    <property type="entry name" value="tRNA-synt_1"/>
    <property type="match status" value="1"/>
</dbReference>
<dbReference type="Pfam" id="PF10458">
    <property type="entry name" value="Val_tRNA-synt_C"/>
    <property type="match status" value="1"/>
</dbReference>
<dbReference type="PRINTS" id="PR00986">
    <property type="entry name" value="TRNASYNTHVAL"/>
</dbReference>
<dbReference type="SUPFAM" id="SSF47323">
    <property type="entry name" value="Anticodon-binding domain of a subclass of class I aminoacyl-tRNA synthetases"/>
    <property type="match status" value="1"/>
</dbReference>
<dbReference type="SUPFAM" id="SSF52374">
    <property type="entry name" value="Nucleotidylyl transferase"/>
    <property type="match status" value="1"/>
</dbReference>
<dbReference type="SUPFAM" id="SSF46589">
    <property type="entry name" value="tRNA-binding arm"/>
    <property type="match status" value="1"/>
</dbReference>
<dbReference type="SUPFAM" id="SSF50677">
    <property type="entry name" value="ValRS/IleRS/LeuRS editing domain"/>
    <property type="match status" value="1"/>
</dbReference>
<dbReference type="PROSITE" id="PS00178">
    <property type="entry name" value="AA_TRNA_LIGASE_I"/>
    <property type="match status" value="1"/>
</dbReference>
<protein>
    <recommendedName>
        <fullName evidence="1">Valine--tRNA ligase</fullName>
        <ecNumber evidence="1">6.1.1.9</ecNumber>
    </recommendedName>
    <alternativeName>
        <fullName evidence="1">Valyl-tRNA synthetase</fullName>
        <shortName evidence="1">ValRS</shortName>
    </alternativeName>
</protein>
<reference key="1">
    <citation type="journal article" date="2006" name="Appl. Environ. Microbiol.">
        <title>Genome sequence of the chemolithoautotrophic nitrite-oxidizing bacterium Nitrobacter winogradskyi Nb-255.</title>
        <authorList>
            <person name="Starkenburg S.R."/>
            <person name="Chain P.S.G."/>
            <person name="Sayavedra-Soto L.A."/>
            <person name="Hauser L."/>
            <person name="Land M.L."/>
            <person name="Larimer F.W."/>
            <person name="Malfatti S.A."/>
            <person name="Klotz M.G."/>
            <person name="Bottomley P.J."/>
            <person name="Arp D.J."/>
            <person name="Hickey W.J."/>
        </authorList>
    </citation>
    <scope>NUCLEOTIDE SEQUENCE [LARGE SCALE GENOMIC DNA]</scope>
    <source>
        <strain>ATCC 25391 / DSM 10237 / CIP 104748 / NCIMB 11846 / Nb-255</strain>
    </source>
</reference>
<feature type="chain" id="PRO_0000224517" description="Valine--tRNA ligase">
    <location>
        <begin position="1"/>
        <end position="952"/>
    </location>
</feature>
<feature type="coiled-coil region" evidence="1">
    <location>
        <begin position="894"/>
        <end position="950"/>
    </location>
</feature>
<feature type="short sequence motif" description="'HIGH' region">
    <location>
        <begin position="45"/>
        <end position="55"/>
    </location>
</feature>
<feature type="short sequence motif" description="'KMSKS' region">
    <location>
        <begin position="571"/>
        <end position="575"/>
    </location>
</feature>
<feature type="binding site" evidence="1">
    <location>
        <position position="574"/>
    </location>
    <ligand>
        <name>ATP</name>
        <dbReference type="ChEBI" id="CHEBI:30616"/>
    </ligand>
</feature>
<name>SYV_NITWN</name>
<organism>
    <name type="scientific">Nitrobacter winogradskyi (strain ATCC 25391 / DSM 10237 / CIP 104748 / NCIMB 11846 / Nb-255)</name>
    <dbReference type="NCBI Taxonomy" id="323098"/>
    <lineage>
        <taxon>Bacteria</taxon>
        <taxon>Pseudomonadati</taxon>
        <taxon>Pseudomonadota</taxon>
        <taxon>Alphaproteobacteria</taxon>
        <taxon>Hyphomicrobiales</taxon>
        <taxon>Nitrobacteraceae</taxon>
        <taxon>Nitrobacter</taxon>
    </lineage>
</organism>
<comment type="function">
    <text evidence="1">Catalyzes the attachment of valine to tRNA(Val). As ValRS can inadvertently accommodate and process structurally similar amino acids such as threonine, to avoid such errors, it has a 'posttransfer' editing activity that hydrolyzes mischarged Thr-tRNA(Val) in a tRNA-dependent manner.</text>
</comment>
<comment type="catalytic activity">
    <reaction evidence="1">
        <text>tRNA(Val) + L-valine + ATP = L-valyl-tRNA(Val) + AMP + diphosphate</text>
        <dbReference type="Rhea" id="RHEA:10704"/>
        <dbReference type="Rhea" id="RHEA-COMP:9672"/>
        <dbReference type="Rhea" id="RHEA-COMP:9708"/>
        <dbReference type="ChEBI" id="CHEBI:30616"/>
        <dbReference type="ChEBI" id="CHEBI:33019"/>
        <dbReference type="ChEBI" id="CHEBI:57762"/>
        <dbReference type="ChEBI" id="CHEBI:78442"/>
        <dbReference type="ChEBI" id="CHEBI:78537"/>
        <dbReference type="ChEBI" id="CHEBI:456215"/>
        <dbReference type="EC" id="6.1.1.9"/>
    </reaction>
</comment>
<comment type="subunit">
    <text evidence="1">Monomer.</text>
</comment>
<comment type="subcellular location">
    <subcellularLocation>
        <location evidence="1">Cytoplasm</location>
    </subcellularLocation>
</comment>
<comment type="domain">
    <text evidence="1">ValRS has two distinct active sites: one for aminoacylation and one for editing. The misactivated threonine is translocated from the active site to the editing site.</text>
</comment>
<comment type="domain">
    <text evidence="1">The C-terminal coiled-coil domain is crucial for aminoacylation activity.</text>
</comment>
<comment type="similarity">
    <text evidence="1">Belongs to the class-I aminoacyl-tRNA synthetase family. ValS type 1 subfamily.</text>
</comment>
<accession>Q3SSP4</accession>